<organism>
    <name type="scientific">Yersinia pestis bv. Antiqua (strain Nepal516)</name>
    <dbReference type="NCBI Taxonomy" id="377628"/>
    <lineage>
        <taxon>Bacteria</taxon>
        <taxon>Pseudomonadati</taxon>
        <taxon>Pseudomonadota</taxon>
        <taxon>Gammaproteobacteria</taxon>
        <taxon>Enterobacterales</taxon>
        <taxon>Yersiniaceae</taxon>
        <taxon>Yersinia</taxon>
    </lineage>
</organism>
<comment type="function">
    <text evidence="1">The UvrABC repair system catalyzes the recognition and processing of DNA lesions. UvrC both incises the 5' and 3' sides of the lesion. The N-terminal half is responsible for the 3' incision and the C-terminal half is responsible for the 5' incision.</text>
</comment>
<comment type="subunit">
    <text evidence="1">Interacts with UvrB in an incision complex.</text>
</comment>
<comment type="subcellular location">
    <subcellularLocation>
        <location evidence="1">Cytoplasm</location>
    </subcellularLocation>
</comment>
<comment type="similarity">
    <text evidence="1">Belongs to the UvrC family.</text>
</comment>
<comment type="sequence caution" evidence="2">
    <conflict type="erroneous initiation">
        <sequence resource="EMBL-CDS" id="ABG18586"/>
    </conflict>
</comment>
<dbReference type="EMBL" id="CP000305">
    <property type="protein sequence ID" value="ABG18586.1"/>
    <property type="status" value="ALT_INIT"/>
    <property type="molecule type" value="Genomic_DNA"/>
</dbReference>
<dbReference type="EMBL" id="ACNQ01000013">
    <property type="protein sequence ID" value="EEO76336.1"/>
    <property type="molecule type" value="Genomic_DNA"/>
</dbReference>
<dbReference type="RefSeq" id="WP_002220477.1">
    <property type="nucleotide sequence ID" value="NZ_ACNQ01000013.1"/>
</dbReference>
<dbReference type="SMR" id="Q1CHE4"/>
<dbReference type="GeneID" id="57976715"/>
<dbReference type="KEGG" id="ypn:YPN_2258"/>
<dbReference type="HOGENOM" id="CLU_014841_3_2_6"/>
<dbReference type="Proteomes" id="UP000008936">
    <property type="component" value="Chromosome"/>
</dbReference>
<dbReference type="GO" id="GO:0005737">
    <property type="term" value="C:cytoplasm"/>
    <property type="evidence" value="ECO:0007669"/>
    <property type="project" value="UniProtKB-SubCell"/>
</dbReference>
<dbReference type="GO" id="GO:0009380">
    <property type="term" value="C:excinuclease repair complex"/>
    <property type="evidence" value="ECO:0007669"/>
    <property type="project" value="InterPro"/>
</dbReference>
<dbReference type="GO" id="GO:0003677">
    <property type="term" value="F:DNA binding"/>
    <property type="evidence" value="ECO:0007669"/>
    <property type="project" value="UniProtKB-UniRule"/>
</dbReference>
<dbReference type="GO" id="GO:0009381">
    <property type="term" value="F:excinuclease ABC activity"/>
    <property type="evidence" value="ECO:0007669"/>
    <property type="project" value="UniProtKB-UniRule"/>
</dbReference>
<dbReference type="GO" id="GO:0006289">
    <property type="term" value="P:nucleotide-excision repair"/>
    <property type="evidence" value="ECO:0007669"/>
    <property type="project" value="UniProtKB-UniRule"/>
</dbReference>
<dbReference type="GO" id="GO:0009432">
    <property type="term" value="P:SOS response"/>
    <property type="evidence" value="ECO:0007669"/>
    <property type="project" value="UniProtKB-UniRule"/>
</dbReference>
<dbReference type="CDD" id="cd10434">
    <property type="entry name" value="GIY-YIG_UvrC_Cho"/>
    <property type="match status" value="1"/>
</dbReference>
<dbReference type="FunFam" id="1.10.150.20:FF:000005">
    <property type="entry name" value="UvrABC system protein C"/>
    <property type="match status" value="1"/>
</dbReference>
<dbReference type="FunFam" id="3.30.420.340:FF:000001">
    <property type="entry name" value="UvrABC system protein C"/>
    <property type="match status" value="1"/>
</dbReference>
<dbReference type="FunFam" id="3.40.1440.10:FF:000001">
    <property type="entry name" value="UvrABC system protein C"/>
    <property type="match status" value="1"/>
</dbReference>
<dbReference type="FunFam" id="4.10.860.10:FF:000002">
    <property type="entry name" value="UvrABC system protein C"/>
    <property type="match status" value="1"/>
</dbReference>
<dbReference type="Gene3D" id="1.10.150.20">
    <property type="entry name" value="5' to 3' exonuclease, C-terminal subdomain"/>
    <property type="match status" value="1"/>
</dbReference>
<dbReference type="Gene3D" id="3.40.1440.10">
    <property type="entry name" value="GIY-YIG endonuclease"/>
    <property type="match status" value="1"/>
</dbReference>
<dbReference type="Gene3D" id="4.10.860.10">
    <property type="entry name" value="UVR domain"/>
    <property type="match status" value="1"/>
</dbReference>
<dbReference type="Gene3D" id="3.30.420.340">
    <property type="entry name" value="UvrC, RNAse H endonuclease domain"/>
    <property type="match status" value="1"/>
</dbReference>
<dbReference type="HAMAP" id="MF_00203">
    <property type="entry name" value="UvrC"/>
    <property type="match status" value="1"/>
</dbReference>
<dbReference type="InterPro" id="IPR000305">
    <property type="entry name" value="GIY-YIG_endonuc"/>
</dbReference>
<dbReference type="InterPro" id="IPR035901">
    <property type="entry name" value="GIY-YIG_endonuc_sf"/>
</dbReference>
<dbReference type="InterPro" id="IPR047296">
    <property type="entry name" value="GIY-YIG_UvrC_Cho"/>
</dbReference>
<dbReference type="InterPro" id="IPR003583">
    <property type="entry name" value="Hlx-hairpin-Hlx_DNA-bd_motif"/>
</dbReference>
<dbReference type="InterPro" id="IPR010994">
    <property type="entry name" value="RuvA_2-like"/>
</dbReference>
<dbReference type="InterPro" id="IPR001943">
    <property type="entry name" value="UVR_dom"/>
</dbReference>
<dbReference type="InterPro" id="IPR036876">
    <property type="entry name" value="UVR_dom_sf"/>
</dbReference>
<dbReference type="InterPro" id="IPR050066">
    <property type="entry name" value="UvrABC_protein_C"/>
</dbReference>
<dbReference type="InterPro" id="IPR004791">
    <property type="entry name" value="UvrC"/>
</dbReference>
<dbReference type="InterPro" id="IPR001162">
    <property type="entry name" value="UvrC_RNase_H_dom"/>
</dbReference>
<dbReference type="InterPro" id="IPR038476">
    <property type="entry name" value="UvrC_RNase_H_dom_sf"/>
</dbReference>
<dbReference type="NCBIfam" id="NF001824">
    <property type="entry name" value="PRK00558.1-5"/>
    <property type="match status" value="1"/>
</dbReference>
<dbReference type="NCBIfam" id="TIGR00194">
    <property type="entry name" value="uvrC"/>
    <property type="match status" value="1"/>
</dbReference>
<dbReference type="PANTHER" id="PTHR30562:SF1">
    <property type="entry name" value="UVRABC SYSTEM PROTEIN C"/>
    <property type="match status" value="1"/>
</dbReference>
<dbReference type="PANTHER" id="PTHR30562">
    <property type="entry name" value="UVRC/OXIDOREDUCTASE"/>
    <property type="match status" value="1"/>
</dbReference>
<dbReference type="Pfam" id="PF01541">
    <property type="entry name" value="GIY-YIG"/>
    <property type="match status" value="1"/>
</dbReference>
<dbReference type="Pfam" id="PF14520">
    <property type="entry name" value="HHH_5"/>
    <property type="match status" value="1"/>
</dbReference>
<dbReference type="Pfam" id="PF02151">
    <property type="entry name" value="UVR"/>
    <property type="match status" value="1"/>
</dbReference>
<dbReference type="Pfam" id="PF22920">
    <property type="entry name" value="UvrC_RNaseH"/>
    <property type="match status" value="1"/>
</dbReference>
<dbReference type="Pfam" id="PF08459">
    <property type="entry name" value="UvrC_RNaseH_dom"/>
    <property type="match status" value="1"/>
</dbReference>
<dbReference type="SMART" id="SM00465">
    <property type="entry name" value="GIYc"/>
    <property type="match status" value="1"/>
</dbReference>
<dbReference type="SMART" id="SM00278">
    <property type="entry name" value="HhH1"/>
    <property type="match status" value="2"/>
</dbReference>
<dbReference type="SUPFAM" id="SSF46600">
    <property type="entry name" value="C-terminal UvrC-binding domain of UvrB"/>
    <property type="match status" value="1"/>
</dbReference>
<dbReference type="SUPFAM" id="SSF82771">
    <property type="entry name" value="GIY-YIG endonuclease"/>
    <property type="match status" value="1"/>
</dbReference>
<dbReference type="SUPFAM" id="SSF47781">
    <property type="entry name" value="RuvA domain 2-like"/>
    <property type="match status" value="1"/>
</dbReference>
<dbReference type="PROSITE" id="PS50164">
    <property type="entry name" value="GIY_YIG"/>
    <property type="match status" value="1"/>
</dbReference>
<dbReference type="PROSITE" id="PS50151">
    <property type="entry name" value="UVR"/>
    <property type="match status" value="1"/>
</dbReference>
<dbReference type="PROSITE" id="PS50165">
    <property type="entry name" value="UVRC"/>
    <property type="match status" value="1"/>
</dbReference>
<reference key="1">
    <citation type="journal article" date="2006" name="J. Bacteriol.">
        <title>Complete genome sequence of Yersinia pestis strains Antiqua and Nepal516: evidence of gene reduction in an emerging pathogen.</title>
        <authorList>
            <person name="Chain P.S.G."/>
            <person name="Hu P."/>
            <person name="Malfatti S.A."/>
            <person name="Radnedge L."/>
            <person name="Larimer F."/>
            <person name="Vergez L.M."/>
            <person name="Worsham P."/>
            <person name="Chu M.C."/>
            <person name="Andersen G.L."/>
        </authorList>
    </citation>
    <scope>NUCLEOTIDE SEQUENCE [LARGE SCALE GENOMIC DNA]</scope>
    <source>
        <strain>Nepal516</strain>
    </source>
</reference>
<reference key="2">
    <citation type="submission" date="2009-04" db="EMBL/GenBank/DDBJ databases">
        <title>Yersinia pestis Nepal516A whole genome shotgun sequencing project.</title>
        <authorList>
            <person name="Plunkett G. III"/>
            <person name="Anderson B.D."/>
            <person name="Baumler D.J."/>
            <person name="Burland V."/>
            <person name="Cabot E.L."/>
            <person name="Glasner J.D."/>
            <person name="Mau B."/>
            <person name="Neeno-Eckwall E."/>
            <person name="Perna N.T."/>
            <person name="Munk A.C."/>
            <person name="Tapia R."/>
            <person name="Green L.D."/>
            <person name="Rogers Y.C."/>
            <person name="Detter J.C."/>
            <person name="Bruce D.C."/>
            <person name="Brettin T.S."/>
        </authorList>
    </citation>
    <scope>NUCLEOTIDE SEQUENCE [LARGE SCALE GENOMIC DNA]</scope>
    <source>
        <strain>Nepal516</strain>
    </source>
</reference>
<sequence>MTDLFDYKEFLKTVTSQPGVYRMYDTAGTVIYVGKAKDLKKRLTSYFRAQVANRKTETLVKNIAQIDVTVTHTETEALLLEHNYIKLYQPRYNVLLRDDKSYPLIFLSADEHPRLAVHRGAKHEKGEYFGPFPNSYAVRETLALLQKLFPVRQCENSVYRNRSRPCLQYQIGRCSGPCVEGLVSEEEYQRQVDYVRLFLSGKDQQVLTQLITRMEEASQQLHFEDAARIRDQIQAVRRVTEQQFVSGDSEDLDVIGVAFDAGLACVHVLFIRLGKVLGSRSYFPKVPAGTELSEVVQTFVGQFYLQGSQGRTLPGEILLDFTLTEKDLLASSLSELAGRKIQIQSRPRGDRARYLKLARTNASTALITRLSQQSTIHQRMKELAKVLKLDEINRMECFDISHTMGEQTVASCVVFDANGPVRSEYRRYNISGITPGDDYAAMAQVLKRRYGKALDDQKIPDVIFIDGGKGQLSQAFDVFASLNVPWDKQKPLLVGVAKGSDRKAGLETLFLASEGEGFSLPPDSPALHLIQHIRDDSHNHAITGHRQRRSKVKNTSALEMIEGVGPKRRQVLLKYMGGLQPLFNASVEEIAKVPGISQALAEKIHNALKH</sequence>
<proteinExistence type="inferred from homology"/>
<feature type="chain" id="PRO_0000264981" description="UvrABC system protein C">
    <location>
        <begin position="1"/>
        <end position="610"/>
    </location>
</feature>
<feature type="domain" description="GIY-YIG" evidence="1">
    <location>
        <begin position="16"/>
        <end position="94"/>
    </location>
</feature>
<feature type="domain" description="UVR" evidence="1">
    <location>
        <begin position="204"/>
        <end position="239"/>
    </location>
</feature>
<evidence type="ECO:0000255" key="1">
    <source>
        <dbReference type="HAMAP-Rule" id="MF_00203"/>
    </source>
</evidence>
<evidence type="ECO:0000305" key="2"/>
<gene>
    <name evidence="1" type="primary">uvrC</name>
    <name type="ordered locus">YPN_2258</name>
    <name type="ORF">YP516_2537</name>
</gene>
<keyword id="KW-0963">Cytoplasm</keyword>
<keyword id="KW-0227">DNA damage</keyword>
<keyword id="KW-0228">DNA excision</keyword>
<keyword id="KW-0234">DNA repair</keyword>
<keyword id="KW-0267">Excision nuclease</keyword>
<keyword id="KW-0742">SOS response</keyword>
<protein>
    <recommendedName>
        <fullName evidence="1">UvrABC system protein C</fullName>
        <shortName evidence="1">Protein UvrC</shortName>
    </recommendedName>
    <alternativeName>
        <fullName evidence="1">Excinuclease ABC subunit C</fullName>
    </alternativeName>
</protein>
<accession>Q1CHE4</accession>
<accession>C4GUE9</accession>
<name>UVRC_YERPN</name>